<proteinExistence type="inferred from homology"/>
<name>MNMG_SHIDS</name>
<accession>Q329T0</accession>
<keyword id="KW-0963">Cytoplasm</keyword>
<keyword id="KW-0274">FAD</keyword>
<keyword id="KW-0285">Flavoprotein</keyword>
<keyword id="KW-0520">NAD</keyword>
<keyword id="KW-1185">Reference proteome</keyword>
<keyword id="KW-0819">tRNA processing</keyword>
<evidence type="ECO:0000255" key="1">
    <source>
        <dbReference type="HAMAP-Rule" id="MF_00129"/>
    </source>
</evidence>
<feature type="chain" id="PRO_1000016680" description="tRNA uridine 5-carboxymethylaminomethyl modification enzyme MnmG">
    <location>
        <begin position="1"/>
        <end position="629"/>
    </location>
</feature>
<feature type="binding site" evidence="1">
    <location>
        <begin position="13"/>
        <end position="18"/>
    </location>
    <ligand>
        <name>FAD</name>
        <dbReference type="ChEBI" id="CHEBI:57692"/>
    </ligand>
</feature>
<feature type="binding site" evidence="1">
    <location>
        <position position="125"/>
    </location>
    <ligand>
        <name>FAD</name>
        <dbReference type="ChEBI" id="CHEBI:57692"/>
    </ligand>
</feature>
<feature type="binding site" evidence="1">
    <location>
        <position position="180"/>
    </location>
    <ligand>
        <name>FAD</name>
        <dbReference type="ChEBI" id="CHEBI:57692"/>
    </ligand>
</feature>
<feature type="binding site" evidence="1">
    <location>
        <begin position="273"/>
        <end position="287"/>
    </location>
    <ligand>
        <name>NAD(+)</name>
        <dbReference type="ChEBI" id="CHEBI:57540"/>
    </ligand>
</feature>
<feature type="binding site" evidence="1">
    <location>
        <position position="370"/>
    </location>
    <ligand>
        <name>FAD</name>
        <dbReference type="ChEBI" id="CHEBI:57692"/>
    </ligand>
</feature>
<gene>
    <name evidence="1" type="primary">mnmG</name>
    <name evidence="1" type="synonym">gidA</name>
    <name type="ordered locus">SDY_4007</name>
</gene>
<organism>
    <name type="scientific">Shigella dysenteriae serotype 1 (strain Sd197)</name>
    <dbReference type="NCBI Taxonomy" id="300267"/>
    <lineage>
        <taxon>Bacteria</taxon>
        <taxon>Pseudomonadati</taxon>
        <taxon>Pseudomonadota</taxon>
        <taxon>Gammaproteobacteria</taxon>
        <taxon>Enterobacterales</taxon>
        <taxon>Enterobacteriaceae</taxon>
        <taxon>Shigella</taxon>
    </lineage>
</organism>
<reference key="1">
    <citation type="journal article" date="2005" name="Nucleic Acids Res.">
        <title>Genome dynamics and diversity of Shigella species, the etiologic agents of bacillary dysentery.</title>
        <authorList>
            <person name="Yang F."/>
            <person name="Yang J."/>
            <person name="Zhang X."/>
            <person name="Chen L."/>
            <person name="Jiang Y."/>
            <person name="Yan Y."/>
            <person name="Tang X."/>
            <person name="Wang J."/>
            <person name="Xiong Z."/>
            <person name="Dong J."/>
            <person name="Xue Y."/>
            <person name="Zhu Y."/>
            <person name="Xu X."/>
            <person name="Sun L."/>
            <person name="Chen S."/>
            <person name="Nie H."/>
            <person name="Peng J."/>
            <person name="Xu J."/>
            <person name="Wang Y."/>
            <person name="Yuan Z."/>
            <person name="Wen Y."/>
            <person name="Yao Z."/>
            <person name="Shen Y."/>
            <person name="Qiang B."/>
            <person name="Hou Y."/>
            <person name="Yu J."/>
            <person name="Jin Q."/>
        </authorList>
    </citation>
    <scope>NUCLEOTIDE SEQUENCE [LARGE SCALE GENOMIC DNA]</scope>
    <source>
        <strain>Sd197</strain>
    </source>
</reference>
<comment type="function">
    <text evidence="1">NAD-binding protein involved in the addition of a carboxymethylaminomethyl (cmnm) group at the wobble position (U34) of certain tRNAs, forming tRNA-cmnm(5)s(2)U34.</text>
</comment>
<comment type="cofactor">
    <cofactor evidence="1">
        <name>FAD</name>
        <dbReference type="ChEBI" id="CHEBI:57692"/>
    </cofactor>
</comment>
<comment type="subunit">
    <text evidence="1">Homodimer. Heterotetramer of two MnmE and two MnmG subunits.</text>
</comment>
<comment type="subcellular location">
    <subcellularLocation>
        <location evidence="1">Cytoplasm</location>
    </subcellularLocation>
</comment>
<comment type="similarity">
    <text evidence="1">Belongs to the MnmG family.</text>
</comment>
<sequence length="629" mass="69491">MFYPDPFDVIIIGGGHAGTEAAMAAARMGQQTLLLTHNIDTLGQMSCNPAIGGIGKGHLVKEVDALGGLMAKAIDQAGIQFRILNASKGPAVRATRAQADRVLYRQAVRTALENQPNLMIFQQAVEDLIVENDRVVGAVTQMGLKFRAKAVVLTVGTFLDGKIHIGLDNYSGGRAGDPPSIPLSRRLRELPLRVGRLKTGTPPRIDARTIDFSVLAQQHGDNPMPVFSFMGNASQHPQQVPCYITHTNEKTHDVIRSNLDRSPMYAGVIEGVGPRYCPSIEDKVMRFADRNQHQIFLEPEGLTSNEIYPNGISTSLPFDVQMQIVRSMQGMENAKIVRPGYAIEYDFFDPRDLKPTLESKFLQGLFFAGQINGTTGYEEAAAQGLLAGLNAARLSADKEGWAPARSQAYLGVLVDDLCTLGTKEPYRMFTSRAEYRLMLREDNADLRLTEIGRELGLVDDERWARFNEKLENIERERQRLKSTRVTPSAEAAAEVNAHLTAPLSREASGEDLLRRPEMTYEKLTTLTPFAPALTDEQAAEQVEIQVKYEGYIARQQDEIEKQLRNENTLLPATLDYRQVSGLSNEVIAKLNDHKPASIGQASRISGVTPAAISILLVWLKKQGMLRRSA</sequence>
<protein>
    <recommendedName>
        <fullName evidence="1">tRNA uridine 5-carboxymethylaminomethyl modification enzyme MnmG</fullName>
    </recommendedName>
    <alternativeName>
        <fullName evidence="1">Glucose-inhibited division protein A</fullName>
    </alternativeName>
</protein>
<dbReference type="EMBL" id="CP000034">
    <property type="protein sequence ID" value="ABB63925.1"/>
    <property type="molecule type" value="Genomic_DNA"/>
</dbReference>
<dbReference type="RefSeq" id="WP_000499797.1">
    <property type="nucleotide sequence ID" value="NC_007606.1"/>
</dbReference>
<dbReference type="RefSeq" id="YP_405416.1">
    <property type="nucleotide sequence ID" value="NC_007606.1"/>
</dbReference>
<dbReference type="SMR" id="Q329T0"/>
<dbReference type="STRING" id="300267.SDY_4007"/>
<dbReference type="EnsemblBacteria" id="ABB63925">
    <property type="protein sequence ID" value="ABB63925"/>
    <property type="gene ID" value="SDY_4007"/>
</dbReference>
<dbReference type="KEGG" id="sdy:SDY_4007"/>
<dbReference type="PATRIC" id="fig|300267.13.peg.4719"/>
<dbReference type="HOGENOM" id="CLU_007831_2_2_6"/>
<dbReference type="Proteomes" id="UP000002716">
    <property type="component" value="Chromosome"/>
</dbReference>
<dbReference type="GO" id="GO:0005829">
    <property type="term" value="C:cytosol"/>
    <property type="evidence" value="ECO:0007669"/>
    <property type="project" value="TreeGrafter"/>
</dbReference>
<dbReference type="GO" id="GO:0050660">
    <property type="term" value="F:flavin adenine dinucleotide binding"/>
    <property type="evidence" value="ECO:0007669"/>
    <property type="project" value="UniProtKB-UniRule"/>
</dbReference>
<dbReference type="GO" id="GO:0030488">
    <property type="term" value="P:tRNA methylation"/>
    <property type="evidence" value="ECO:0007669"/>
    <property type="project" value="TreeGrafter"/>
</dbReference>
<dbReference type="GO" id="GO:0002098">
    <property type="term" value="P:tRNA wobble uridine modification"/>
    <property type="evidence" value="ECO:0007669"/>
    <property type="project" value="InterPro"/>
</dbReference>
<dbReference type="FunFam" id="1.10.10.1800:FF:000001">
    <property type="entry name" value="tRNA uridine 5-carboxymethylaminomethyl modification enzyme MnmG"/>
    <property type="match status" value="1"/>
</dbReference>
<dbReference type="FunFam" id="1.10.150.570:FF:000001">
    <property type="entry name" value="tRNA uridine 5-carboxymethylaminomethyl modification enzyme MnmG"/>
    <property type="match status" value="1"/>
</dbReference>
<dbReference type="FunFam" id="3.50.50.60:FF:000002">
    <property type="entry name" value="tRNA uridine 5-carboxymethylaminomethyl modification enzyme MnmG"/>
    <property type="match status" value="1"/>
</dbReference>
<dbReference type="FunFam" id="3.50.50.60:FF:000010">
    <property type="entry name" value="tRNA uridine 5-carboxymethylaminomethyl modification enzyme MnmG"/>
    <property type="match status" value="1"/>
</dbReference>
<dbReference type="Gene3D" id="3.50.50.60">
    <property type="entry name" value="FAD/NAD(P)-binding domain"/>
    <property type="match status" value="2"/>
</dbReference>
<dbReference type="Gene3D" id="1.10.150.570">
    <property type="entry name" value="GidA associated domain, C-terminal subdomain"/>
    <property type="match status" value="1"/>
</dbReference>
<dbReference type="Gene3D" id="1.10.10.1800">
    <property type="entry name" value="tRNA uridine 5-carboxymethylaminomethyl modification enzyme MnmG/GidA"/>
    <property type="match status" value="1"/>
</dbReference>
<dbReference type="HAMAP" id="MF_00129">
    <property type="entry name" value="MnmG_GidA"/>
    <property type="match status" value="1"/>
</dbReference>
<dbReference type="InterPro" id="IPR036188">
    <property type="entry name" value="FAD/NAD-bd_sf"/>
</dbReference>
<dbReference type="InterPro" id="IPR049312">
    <property type="entry name" value="GIDA_C_N"/>
</dbReference>
<dbReference type="InterPro" id="IPR004416">
    <property type="entry name" value="MnmG"/>
</dbReference>
<dbReference type="InterPro" id="IPR002218">
    <property type="entry name" value="MnmG-rel"/>
</dbReference>
<dbReference type="InterPro" id="IPR020595">
    <property type="entry name" value="MnmG-rel_CS"/>
</dbReference>
<dbReference type="InterPro" id="IPR026904">
    <property type="entry name" value="MnmG_C"/>
</dbReference>
<dbReference type="InterPro" id="IPR047001">
    <property type="entry name" value="MnmG_C_subdom"/>
</dbReference>
<dbReference type="InterPro" id="IPR044920">
    <property type="entry name" value="MnmG_C_subdom_sf"/>
</dbReference>
<dbReference type="InterPro" id="IPR040131">
    <property type="entry name" value="MnmG_N"/>
</dbReference>
<dbReference type="NCBIfam" id="TIGR00136">
    <property type="entry name" value="mnmG_gidA"/>
    <property type="match status" value="1"/>
</dbReference>
<dbReference type="PANTHER" id="PTHR11806">
    <property type="entry name" value="GLUCOSE INHIBITED DIVISION PROTEIN A"/>
    <property type="match status" value="1"/>
</dbReference>
<dbReference type="PANTHER" id="PTHR11806:SF0">
    <property type="entry name" value="PROTEIN MTO1 HOMOLOG, MITOCHONDRIAL"/>
    <property type="match status" value="1"/>
</dbReference>
<dbReference type="Pfam" id="PF01134">
    <property type="entry name" value="GIDA"/>
    <property type="match status" value="1"/>
</dbReference>
<dbReference type="Pfam" id="PF21680">
    <property type="entry name" value="GIDA_C_1st"/>
    <property type="match status" value="1"/>
</dbReference>
<dbReference type="Pfam" id="PF13932">
    <property type="entry name" value="SAM_GIDA_C"/>
    <property type="match status" value="1"/>
</dbReference>
<dbReference type="SMART" id="SM01228">
    <property type="entry name" value="GIDA_assoc_3"/>
    <property type="match status" value="1"/>
</dbReference>
<dbReference type="SUPFAM" id="SSF51905">
    <property type="entry name" value="FAD/NAD(P)-binding domain"/>
    <property type="match status" value="1"/>
</dbReference>
<dbReference type="PROSITE" id="PS01280">
    <property type="entry name" value="GIDA_1"/>
    <property type="match status" value="1"/>
</dbReference>
<dbReference type="PROSITE" id="PS01281">
    <property type="entry name" value="GIDA_2"/>
    <property type="match status" value="1"/>
</dbReference>